<sequence length="398" mass="44923">MDTQAIKHSVQHSGRYNRKGFESPTQRAKALGESYQSDLIASIRENNFSFEKGRLKIKLAKSFGFCWGVERAVAMAYETRRHYPNEDIWMTNEIIHNPSVNNHLSRMNVKIISAKNGIKDFSSVSTGDVVILPAFGATVQEMQLLHEKKCQIIDTTCPWVSKVWHTVEKHKKHTFTSIIHGKYKHEETLATRSFAGNYLVVFDLDEAEYVSNYIQGHGDKNKFMNKFAKACSDGFDPDVHLERIGVANQTTMLKSETEEIGKFFEKTMLMKYGPANINDHFLAFNTICDATEERQDAMFSLVNEDLDILVVIGGFNSSNTTHLQEIAISNNIESFHIDISDRISVENNSICHKPLESELILKKNFIPDGKIKVGITSGASTPDKIVADVIEKLIAITQ</sequence>
<comment type="function">
    <text evidence="1">Catalyzes the conversion of 1-hydroxy-2-methyl-2-(E)-butenyl 4-diphosphate (HMBPP) into a mixture of isopentenyl diphosphate (IPP) and dimethylallyl diphosphate (DMAPP). Acts in the terminal step of the DOXP/MEP pathway for isoprenoid precursor biosynthesis.</text>
</comment>
<comment type="catalytic activity">
    <reaction evidence="1">
        <text>isopentenyl diphosphate + 2 oxidized [2Fe-2S]-[ferredoxin] + H2O = (2E)-4-hydroxy-3-methylbut-2-enyl diphosphate + 2 reduced [2Fe-2S]-[ferredoxin] + 2 H(+)</text>
        <dbReference type="Rhea" id="RHEA:24488"/>
        <dbReference type="Rhea" id="RHEA-COMP:10000"/>
        <dbReference type="Rhea" id="RHEA-COMP:10001"/>
        <dbReference type="ChEBI" id="CHEBI:15377"/>
        <dbReference type="ChEBI" id="CHEBI:15378"/>
        <dbReference type="ChEBI" id="CHEBI:33737"/>
        <dbReference type="ChEBI" id="CHEBI:33738"/>
        <dbReference type="ChEBI" id="CHEBI:128753"/>
        <dbReference type="ChEBI" id="CHEBI:128769"/>
        <dbReference type="EC" id="1.17.7.4"/>
    </reaction>
</comment>
<comment type="catalytic activity">
    <reaction evidence="1">
        <text>dimethylallyl diphosphate + 2 oxidized [2Fe-2S]-[ferredoxin] + H2O = (2E)-4-hydroxy-3-methylbut-2-enyl diphosphate + 2 reduced [2Fe-2S]-[ferredoxin] + 2 H(+)</text>
        <dbReference type="Rhea" id="RHEA:24825"/>
        <dbReference type="Rhea" id="RHEA-COMP:10000"/>
        <dbReference type="Rhea" id="RHEA-COMP:10001"/>
        <dbReference type="ChEBI" id="CHEBI:15377"/>
        <dbReference type="ChEBI" id="CHEBI:15378"/>
        <dbReference type="ChEBI" id="CHEBI:33737"/>
        <dbReference type="ChEBI" id="CHEBI:33738"/>
        <dbReference type="ChEBI" id="CHEBI:57623"/>
        <dbReference type="ChEBI" id="CHEBI:128753"/>
        <dbReference type="EC" id="1.17.7.4"/>
    </reaction>
</comment>
<comment type="cofactor">
    <cofactor evidence="1">
        <name>[4Fe-4S] cluster</name>
        <dbReference type="ChEBI" id="CHEBI:49883"/>
    </cofactor>
    <text evidence="1">Binds 1 [4Fe-4S] cluster per subunit.</text>
</comment>
<comment type="pathway">
    <text evidence="1">Isoprenoid biosynthesis; dimethylallyl diphosphate biosynthesis; dimethylallyl diphosphate from (2E)-4-hydroxy-3-methylbutenyl diphosphate: step 1/1.</text>
</comment>
<comment type="pathway">
    <text evidence="1">Isoprenoid biosynthesis; isopentenyl diphosphate biosynthesis via DXP pathway; isopentenyl diphosphate from 1-deoxy-D-xylulose 5-phosphate: step 6/6.</text>
</comment>
<comment type="similarity">
    <text evidence="1">Belongs to the IspH family.</text>
</comment>
<name>ISPH_PROM5</name>
<gene>
    <name evidence="1" type="primary">ispH</name>
    <name type="ordered locus">P9515_02971</name>
</gene>
<reference key="1">
    <citation type="journal article" date="2007" name="PLoS Genet.">
        <title>Patterns and implications of gene gain and loss in the evolution of Prochlorococcus.</title>
        <authorList>
            <person name="Kettler G.C."/>
            <person name="Martiny A.C."/>
            <person name="Huang K."/>
            <person name="Zucker J."/>
            <person name="Coleman M.L."/>
            <person name="Rodrigue S."/>
            <person name="Chen F."/>
            <person name="Lapidus A."/>
            <person name="Ferriera S."/>
            <person name="Johnson J."/>
            <person name="Steglich C."/>
            <person name="Church G.M."/>
            <person name="Richardson P."/>
            <person name="Chisholm S.W."/>
        </authorList>
    </citation>
    <scope>NUCLEOTIDE SEQUENCE [LARGE SCALE GENOMIC DNA]</scope>
    <source>
        <strain>MIT 9515</strain>
    </source>
</reference>
<protein>
    <recommendedName>
        <fullName evidence="1">4-hydroxy-3-methylbut-2-enyl diphosphate reductase</fullName>
        <shortName evidence="1">HMBPP reductase</shortName>
        <ecNumber evidence="1">1.17.7.4</ecNumber>
    </recommendedName>
</protein>
<organism>
    <name type="scientific">Prochlorococcus marinus (strain MIT 9515)</name>
    <dbReference type="NCBI Taxonomy" id="167542"/>
    <lineage>
        <taxon>Bacteria</taxon>
        <taxon>Bacillati</taxon>
        <taxon>Cyanobacteriota</taxon>
        <taxon>Cyanophyceae</taxon>
        <taxon>Synechococcales</taxon>
        <taxon>Prochlorococcaceae</taxon>
        <taxon>Prochlorococcus</taxon>
    </lineage>
</organism>
<accession>A2BUP5</accession>
<feature type="chain" id="PRO_1000021153" description="4-hydroxy-3-methylbut-2-enyl diphosphate reductase">
    <location>
        <begin position="1"/>
        <end position="398"/>
    </location>
</feature>
<feature type="active site" description="Proton donor" evidence="1">
    <location>
        <position position="187"/>
    </location>
</feature>
<feature type="binding site" evidence="1">
    <location>
        <position position="66"/>
    </location>
    <ligand>
        <name>[4Fe-4S] cluster</name>
        <dbReference type="ChEBI" id="CHEBI:49883"/>
    </ligand>
</feature>
<feature type="binding site" evidence="1">
    <location>
        <position position="96"/>
    </location>
    <ligand>
        <name>(2E)-4-hydroxy-3-methylbut-2-enyl diphosphate</name>
        <dbReference type="ChEBI" id="CHEBI:128753"/>
    </ligand>
</feature>
<feature type="binding site" evidence="1">
    <location>
        <position position="96"/>
    </location>
    <ligand>
        <name>dimethylallyl diphosphate</name>
        <dbReference type="ChEBI" id="CHEBI:57623"/>
    </ligand>
</feature>
<feature type="binding site" evidence="1">
    <location>
        <position position="96"/>
    </location>
    <ligand>
        <name>isopentenyl diphosphate</name>
        <dbReference type="ChEBI" id="CHEBI:128769"/>
    </ligand>
</feature>
<feature type="binding site" evidence="1">
    <location>
        <position position="157"/>
    </location>
    <ligand>
        <name>[4Fe-4S] cluster</name>
        <dbReference type="ChEBI" id="CHEBI:49883"/>
    </ligand>
</feature>
<feature type="binding site" evidence="1">
    <location>
        <position position="185"/>
    </location>
    <ligand>
        <name>(2E)-4-hydroxy-3-methylbut-2-enyl diphosphate</name>
        <dbReference type="ChEBI" id="CHEBI:128753"/>
    </ligand>
</feature>
<feature type="binding site" evidence="1">
    <location>
        <position position="185"/>
    </location>
    <ligand>
        <name>dimethylallyl diphosphate</name>
        <dbReference type="ChEBI" id="CHEBI:57623"/>
    </ligand>
</feature>
<feature type="binding site" evidence="1">
    <location>
        <position position="185"/>
    </location>
    <ligand>
        <name>isopentenyl diphosphate</name>
        <dbReference type="ChEBI" id="CHEBI:128769"/>
    </ligand>
</feature>
<feature type="binding site" evidence="1">
    <location>
        <position position="250"/>
    </location>
    <ligand>
        <name>(2E)-4-hydroxy-3-methylbut-2-enyl diphosphate</name>
        <dbReference type="ChEBI" id="CHEBI:128753"/>
    </ligand>
</feature>
<feature type="binding site" evidence="1">
    <location>
        <position position="288"/>
    </location>
    <ligand>
        <name>[4Fe-4S] cluster</name>
        <dbReference type="ChEBI" id="CHEBI:49883"/>
    </ligand>
</feature>
<feature type="binding site" evidence="1">
    <location>
        <position position="317"/>
    </location>
    <ligand>
        <name>(2E)-4-hydroxy-3-methylbut-2-enyl diphosphate</name>
        <dbReference type="ChEBI" id="CHEBI:128753"/>
    </ligand>
</feature>
<feature type="binding site" evidence="1">
    <location>
        <position position="317"/>
    </location>
    <ligand>
        <name>dimethylallyl diphosphate</name>
        <dbReference type="ChEBI" id="CHEBI:57623"/>
    </ligand>
</feature>
<feature type="binding site" evidence="1">
    <location>
        <position position="317"/>
    </location>
    <ligand>
        <name>isopentenyl diphosphate</name>
        <dbReference type="ChEBI" id="CHEBI:128769"/>
    </ligand>
</feature>
<feature type="binding site" evidence="1">
    <location>
        <position position="318"/>
    </location>
    <ligand>
        <name>(2E)-4-hydroxy-3-methylbut-2-enyl diphosphate</name>
        <dbReference type="ChEBI" id="CHEBI:128753"/>
    </ligand>
</feature>
<feature type="binding site" evidence="1">
    <location>
        <position position="318"/>
    </location>
    <ligand>
        <name>dimethylallyl diphosphate</name>
        <dbReference type="ChEBI" id="CHEBI:57623"/>
    </ligand>
</feature>
<feature type="binding site" evidence="1">
    <location>
        <position position="318"/>
    </location>
    <ligand>
        <name>isopentenyl diphosphate</name>
        <dbReference type="ChEBI" id="CHEBI:128769"/>
    </ligand>
</feature>
<feature type="binding site" evidence="1">
    <location>
        <position position="319"/>
    </location>
    <ligand>
        <name>(2E)-4-hydroxy-3-methylbut-2-enyl diphosphate</name>
        <dbReference type="ChEBI" id="CHEBI:128753"/>
    </ligand>
</feature>
<feature type="binding site" evidence="1">
    <location>
        <position position="319"/>
    </location>
    <ligand>
        <name>dimethylallyl diphosphate</name>
        <dbReference type="ChEBI" id="CHEBI:57623"/>
    </ligand>
</feature>
<feature type="binding site" evidence="1">
    <location>
        <position position="319"/>
    </location>
    <ligand>
        <name>isopentenyl diphosphate</name>
        <dbReference type="ChEBI" id="CHEBI:128769"/>
    </ligand>
</feature>
<feature type="binding site" evidence="1">
    <location>
        <position position="380"/>
    </location>
    <ligand>
        <name>(2E)-4-hydroxy-3-methylbut-2-enyl diphosphate</name>
        <dbReference type="ChEBI" id="CHEBI:128753"/>
    </ligand>
</feature>
<feature type="binding site" evidence="1">
    <location>
        <position position="380"/>
    </location>
    <ligand>
        <name>dimethylallyl diphosphate</name>
        <dbReference type="ChEBI" id="CHEBI:57623"/>
    </ligand>
</feature>
<feature type="binding site" evidence="1">
    <location>
        <position position="380"/>
    </location>
    <ligand>
        <name>isopentenyl diphosphate</name>
        <dbReference type="ChEBI" id="CHEBI:128769"/>
    </ligand>
</feature>
<dbReference type="EC" id="1.17.7.4" evidence="1"/>
<dbReference type="EMBL" id="CP000552">
    <property type="protein sequence ID" value="ABM71506.1"/>
    <property type="molecule type" value="Genomic_DNA"/>
</dbReference>
<dbReference type="RefSeq" id="WP_011819616.1">
    <property type="nucleotide sequence ID" value="NC_008817.1"/>
</dbReference>
<dbReference type="SMR" id="A2BUP5"/>
<dbReference type="STRING" id="167542.P9515_02971"/>
<dbReference type="GeneID" id="60200444"/>
<dbReference type="KEGG" id="pmc:P9515_02971"/>
<dbReference type="eggNOG" id="COG0761">
    <property type="taxonomic scope" value="Bacteria"/>
</dbReference>
<dbReference type="HOGENOM" id="CLU_027486_4_0_3"/>
<dbReference type="OrthoDB" id="9804077at2"/>
<dbReference type="UniPathway" id="UPA00056">
    <property type="reaction ID" value="UER00097"/>
</dbReference>
<dbReference type="UniPathway" id="UPA00059">
    <property type="reaction ID" value="UER00105"/>
</dbReference>
<dbReference type="Proteomes" id="UP000001589">
    <property type="component" value="Chromosome"/>
</dbReference>
<dbReference type="GO" id="GO:0051539">
    <property type="term" value="F:4 iron, 4 sulfur cluster binding"/>
    <property type="evidence" value="ECO:0007669"/>
    <property type="project" value="UniProtKB-UniRule"/>
</dbReference>
<dbReference type="GO" id="GO:0051745">
    <property type="term" value="F:4-hydroxy-3-methylbut-2-enyl diphosphate reductase activity"/>
    <property type="evidence" value="ECO:0007669"/>
    <property type="project" value="UniProtKB-UniRule"/>
</dbReference>
<dbReference type="GO" id="GO:0046872">
    <property type="term" value="F:metal ion binding"/>
    <property type="evidence" value="ECO:0007669"/>
    <property type="project" value="UniProtKB-KW"/>
</dbReference>
<dbReference type="GO" id="GO:0050992">
    <property type="term" value="P:dimethylallyl diphosphate biosynthetic process"/>
    <property type="evidence" value="ECO:0007669"/>
    <property type="project" value="UniProtKB-UniRule"/>
</dbReference>
<dbReference type="GO" id="GO:0019288">
    <property type="term" value="P:isopentenyl diphosphate biosynthetic process, methylerythritol 4-phosphate pathway"/>
    <property type="evidence" value="ECO:0007669"/>
    <property type="project" value="UniProtKB-UniRule"/>
</dbReference>
<dbReference type="GO" id="GO:0016114">
    <property type="term" value="P:terpenoid biosynthetic process"/>
    <property type="evidence" value="ECO:0007669"/>
    <property type="project" value="UniProtKB-UniRule"/>
</dbReference>
<dbReference type="CDD" id="cd13944">
    <property type="entry name" value="lytB_ispH"/>
    <property type="match status" value="1"/>
</dbReference>
<dbReference type="Gene3D" id="3.40.50.11270">
    <property type="match status" value="1"/>
</dbReference>
<dbReference type="Gene3D" id="3.40.1010.20">
    <property type="entry name" value="4-hydroxy-3-methylbut-2-enyl diphosphate reductase, catalytic domain"/>
    <property type="match status" value="2"/>
</dbReference>
<dbReference type="HAMAP" id="MF_00191">
    <property type="entry name" value="IspH"/>
    <property type="match status" value="1"/>
</dbReference>
<dbReference type="InterPro" id="IPR003451">
    <property type="entry name" value="LytB/IspH"/>
</dbReference>
<dbReference type="NCBIfam" id="TIGR00216">
    <property type="entry name" value="ispH_lytB"/>
    <property type="match status" value="1"/>
</dbReference>
<dbReference type="NCBIfam" id="NF009911">
    <property type="entry name" value="PRK13371.1"/>
    <property type="match status" value="1"/>
</dbReference>
<dbReference type="PANTHER" id="PTHR31619">
    <property type="entry name" value="4-HYDROXY-3-METHYLBUT-2-ENYL DIPHOSPHATE REDUCTASE, CHLOROPLASTIC"/>
    <property type="match status" value="1"/>
</dbReference>
<dbReference type="PANTHER" id="PTHR31619:SF5">
    <property type="entry name" value="4-HYDROXY-3-METHYLBUT-2-ENYL DIPHOSPHATE REDUCTASE, CHLOROPLASTIC"/>
    <property type="match status" value="1"/>
</dbReference>
<dbReference type="Pfam" id="PF02401">
    <property type="entry name" value="LYTB"/>
    <property type="match status" value="1"/>
</dbReference>
<proteinExistence type="inferred from homology"/>
<evidence type="ECO:0000255" key="1">
    <source>
        <dbReference type="HAMAP-Rule" id="MF_00191"/>
    </source>
</evidence>
<keyword id="KW-0004">4Fe-4S</keyword>
<keyword id="KW-0408">Iron</keyword>
<keyword id="KW-0411">Iron-sulfur</keyword>
<keyword id="KW-0414">Isoprene biosynthesis</keyword>
<keyword id="KW-0479">Metal-binding</keyword>
<keyword id="KW-0560">Oxidoreductase</keyword>